<keyword id="KW-0053">Apoptosis</keyword>
<keyword id="KW-1035">Host cytoplasm</keyword>
<keyword id="KW-1043">Host membrane</keyword>
<keyword id="KW-1045">Host mitochondrion</keyword>
<keyword id="KW-1046">Host mitochondrion inner membrane</keyword>
<keyword id="KW-1048">Host nucleus</keyword>
<keyword id="KW-0945">Host-virus interaction</keyword>
<keyword id="KW-1090">Inhibition of host innate immune response by virus</keyword>
<keyword id="KW-1097">Inhibition of host MAVS by virus</keyword>
<keyword id="KW-1113">Inhibition of host RLR pathway by virus</keyword>
<keyword id="KW-0472">Membrane</keyword>
<keyword id="KW-1119">Modulation of host cell apoptosis by virus</keyword>
<keyword id="KW-0899">Viral immunoevasion</keyword>
<organismHost>
    <name type="scientific">Aves</name>
    <dbReference type="NCBI Taxonomy" id="8782"/>
</organismHost>
<organismHost>
    <name type="scientific">Cetacea</name>
    <name type="common">whales</name>
    <dbReference type="NCBI Taxonomy" id="9721"/>
</organismHost>
<organismHost>
    <name type="scientific">Homo sapiens</name>
    <name type="common">Human</name>
    <dbReference type="NCBI Taxonomy" id="9606"/>
</organismHost>
<organismHost>
    <name type="scientific">Phocidae</name>
    <name type="common">true seals</name>
    <dbReference type="NCBI Taxonomy" id="9709"/>
</organismHost>
<organismHost>
    <name type="scientific">Sus scrofa</name>
    <name type="common">Pig</name>
    <dbReference type="NCBI Taxonomy" id="9823"/>
</organismHost>
<feature type="chain" id="PRO_0000402433" description="Protein PB1-F2">
    <location>
        <begin position="1"/>
        <end position="90"/>
    </location>
</feature>
<feature type="region of interest" description="Disordered" evidence="2">
    <location>
        <begin position="1"/>
        <end position="31"/>
    </location>
</feature>
<feature type="region of interest" description="Mitochondrial targeting sequence" evidence="1">
    <location>
        <begin position="65"/>
        <end position="87"/>
    </location>
</feature>
<feature type="compositionally biased region" description="Polar residues" evidence="2">
    <location>
        <begin position="1"/>
        <end position="27"/>
    </location>
</feature>
<feature type="site" description="Low pathogenicity" evidence="1">
    <location>
        <position position="66"/>
    </location>
</feature>
<name>PB1F2_I68A4</name>
<sequence>MEQEQDTPWTQSTEHINIQKRGNGQRTQRLEHPNSIRLMDHYLRIMSRVGMHKQIVYWKQWLSLKNPTQGSLKTRVLKRWKLFSKQEWIS</sequence>
<organism>
    <name type="scientific">Influenza A virus (strain A/Hong Kong/1/1968 H3N2)</name>
    <dbReference type="NCBI Taxonomy" id="506350"/>
    <lineage>
        <taxon>Viruses</taxon>
        <taxon>Riboviria</taxon>
        <taxon>Orthornavirae</taxon>
        <taxon>Negarnaviricota</taxon>
        <taxon>Polyploviricotina</taxon>
        <taxon>Insthoviricetes</taxon>
        <taxon>Articulavirales</taxon>
        <taxon>Orthomyxoviridae</taxon>
        <taxon>Alphainfluenzavirus</taxon>
        <taxon>Alphainfluenzavirus influenzae</taxon>
        <taxon>Influenza A virus</taxon>
    </lineage>
</organism>
<reference key="1">
    <citation type="journal article" date="2001" name="Proc. Natl. Acad. Sci. U.S.A.">
        <title>Pattern of mutation in the genome of influenza A virus on adaptation to increased virulence in the mouse lung: identification of functional themes.</title>
        <authorList>
            <person name="Brown E.G."/>
            <person name="Liu H."/>
            <person name="Kit L.C."/>
            <person name="Baird S."/>
            <person name="Nesrallah M."/>
        </authorList>
    </citation>
    <scope>NUCLEOTIDE SEQUENCE [GENOMIC RNA]</scope>
</reference>
<accession>P0C792</accession>
<gene>
    <name evidence="1" type="primary">PB1</name>
</gene>
<proteinExistence type="inferred from homology"/>
<comment type="function">
    <text evidence="1">Plays an important role in promoting lung pathology in both primary viral infection and secondary bacterial infection. Promotes alteration of mitochondrial morphology, dissipation of mitochondrial membrane potential, and cell death. Alternatively, inhibits the production of interferon in the infected cell at the level of host mitochondrial antiviral signaling MAVS. Its level of expression differs greatly depending on which cell type is infected, in a manner that is independent of the levels of expression of other viral proteins. Monocytic cells are more affected than epithelial cells. Seems to disable virus-infected monocytes or other host innate immune cells. During early stage of infection, predisposes the mitochondria to permeability transition through interaction with host SLC25A6/ANT3 and VDAC1. These proteins participate in the formation of the permeability transition pore complex (PTPC) responsible of the release of mitochondrial products that triggers apoptosis.</text>
</comment>
<comment type="subunit">
    <text evidence="1">Oligomer. Interacts with human SLC25A6/ANT3 and VDAC1. Interacts with host MAVS.</text>
</comment>
<comment type="subcellular location">
    <subcellularLocation>
        <location evidence="1">Host mitochondrion inner membrane</location>
    </subcellularLocation>
    <subcellularLocation>
        <location evidence="1">Host nucleus</location>
    </subcellularLocation>
    <subcellularLocation>
        <location evidence="1">Host cytoplasm</location>
        <location evidence="1">Host cytosol</location>
    </subcellularLocation>
    <text evidence="1">Inner mitochondrial membrane in most cells types. Otherwise is detected in the nucleus and cytosol.</text>
</comment>
<comment type="miscellaneous">
    <text>Is not encoded in all strains, and seems to be dispensable for replication.</text>
</comment>
<comment type="similarity">
    <text evidence="1">Belongs to the influenza viruses PB1-F2 family.</text>
</comment>
<protein>
    <recommendedName>
        <fullName evidence="1">Protein PB1-F2</fullName>
    </recommendedName>
</protein>
<dbReference type="EMBL" id="AF348173">
    <property type="status" value="NOT_ANNOTATED_CDS"/>
    <property type="molecule type" value="Genomic_RNA"/>
</dbReference>
<dbReference type="EMBL" id="AF348172">
    <property type="status" value="NOT_ANNOTATED_CDS"/>
    <property type="molecule type" value="Genomic_RNA"/>
</dbReference>
<dbReference type="SMR" id="P0C792"/>
<dbReference type="Proteomes" id="UP000142359">
    <property type="component" value="Genome"/>
</dbReference>
<dbReference type="GO" id="GO:0044164">
    <property type="term" value="C:host cell cytosol"/>
    <property type="evidence" value="ECO:0007669"/>
    <property type="project" value="UniProtKB-SubCell"/>
</dbReference>
<dbReference type="GO" id="GO:0044192">
    <property type="term" value="C:host cell mitochondrial inner membrane"/>
    <property type="evidence" value="ECO:0007669"/>
    <property type="project" value="UniProtKB-SubCell"/>
</dbReference>
<dbReference type="GO" id="GO:0042025">
    <property type="term" value="C:host cell nucleus"/>
    <property type="evidence" value="ECO:0007669"/>
    <property type="project" value="UniProtKB-SubCell"/>
</dbReference>
<dbReference type="GO" id="GO:0016020">
    <property type="term" value="C:membrane"/>
    <property type="evidence" value="ECO:0007669"/>
    <property type="project" value="UniProtKB-UniRule"/>
</dbReference>
<dbReference type="GO" id="GO:0052150">
    <property type="term" value="P:symbiont-mediated perturbation of host apoptosis"/>
    <property type="evidence" value="ECO:0007669"/>
    <property type="project" value="UniProtKB-KW"/>
</dbReference>
<dbReference type="GO" id="GO:0039545">
    <property type="term" value="P:symbiont-mediated suppression of host cytoplasmic pattern recognition receptor signaling pathway via inhibition of MAVS activity"/>
    <property type="evidence" value="ECO:0007669"/>
    <property type="project" value="UniProtKB-KW"/>
</dbReference>
<dbReference type="HAMAP" id="MF_04064">
    <property type="entry name" value="INFV_PB1F2"/>
    <property type="match status" value="1"/>
</dbReference>
<dbReference type="InterPro" id="IPR021045">
    <property type="entry name" value="Flu_proapoptotic_PB1-F2"/>
</dbReference>
<dbReference type="Pfam" id="PF11986">
    <property type="entry name" value="PB1-F2"/>
    <property type="match status" value="1"/>
</dbReference>
<evidence type="ECO:0000255" key="1">
    <source>
        <dbReference type="HAMAP-Rule" id="MF_04064"/>
    </source>
</evidence>
<evidence type="ECO:0000256" key="2">
    <source>
        <dbReference type="SAM" id="MobiDB-lite"/>
    </source>
</evidence>